<name>MPRB_MYCBP</name>
<reference key="1">
    <citation type="journal article" date="2007" name="Proc. Natl. Acad. Sci. U.S.A.">
        <title>Genome plasticity of BCG and impact on vaccine efficacy.</title>
        <authorList>
            <person name="Brosch R."/>
            <person name="Gordon S.V."/>
            <person name="Garnier T."/>
            <person name="Eiglmeier K."/>
            <person name="Frigui W."/>
            <person name="Valenti P."/>
            <person name="Dos Santos S."/>
            <person name="Duthoy S."/>
            <person name="Lacroix C."/>
            <person name="Garcia-Pelayo C."/>
            <person name="Inwald J.K."/>
            <person name="Golby P."/>
            <person name="Garcia J.N."/>
            <person name="Hewinson R.G."/>
            <person name="Behr M.A."/>
            <person name="Quail M.A."/>
            <person name="Churcher C."/>
            <person name="Barrell B.G."/>
            <person name="Parkhill J."/>
            <person name="Cole S.T."/>
        </authorList>
    </citation>
    <scope>NUCLEOTIDE SEQUENCE [LARGE SCALE GENOMIC DNA]</scope>
    <source>
        <strain>BCG / Pasteur 1173P2</strain>
    </source>
</reference>
<organism>
    <name type="scientific">Mycobacterium bovis (strain BCG / Pasteur 1173P2)</name>
    <dbReference type="NCBI Taxonomy" id="410289"/>
    <lineage>
        <taxon>Bacteria</taxon>
        <taxon>Bacillati</taxon>
        <taxon>Actinomycetota</taxon>
        <taxon>Actinomycetes</taxon>
        <taxon>Mycobacteriales</taxon>
        <taxon>Mycobacteriaceae</taxon>
        <taxon>Mycobacterium</taxon>
        <taxon>Mycobacterium tuberculosis complex</taxon>
    </lineage>
</organism>
<evidence type="ECO:0000250" key="1"/>
<evidence type="ECO:0000255" key="2"/>
<evidence type="ECO:0000255" key="3">
    <source>
        <dbReference type="PROSITE-ProRule" id="PRU00102"/>
    </source>
</evidence>
<evidence type="ECO:0000255" key="4">
    <source>
        <dbReference type="PROSITE-ProRule" id="PRU00107"/>
    </source>
</evidence>
<evidence type="ECO:0000256" key="5">
    <source>
        <dbReference type="SAM" id="MobiDB-lite"/>
    </source>
</evidence>
<evidence type="ECO:0000305" key="6"/>
<sequence>MWWFRRRDRAPLRATSSLSLRWRVMLLAMSMVAMVVVLMSFAVYAVISAALYSDIDNQLQSRAQLLIASGSLAADPGKAIEGTAYSDVNAMLVNPGQSIYTAQQPGQTLPVGAAEKAVIRGELFMSRRTTADQRVLAIRLTNGSSLLISKSLKPTEAVMNKLRWVLLIVGGIGVAVAAVAGGMVTRAGLRPVGRLTEAAERVARTDDLRPIPVFGSDELARLTEAFNLMLRALAESRERQARLVTDAGHELRTPLTSLRTNVELLMASMAPGAPRLPKQEMVDLRADVLAQIEELSTLVGDLVDLSRGDAGEVVHEPVDMADVVDRSLERVRRRRNDIHFDVEVIGWQVYGDTAGLSRMALNLMDNAAKWSPPGGHVGVRLSQLDASHAELVVSDRGPGIPVQERRLVFERFYRSASARALPGSGLGLAIVKQVVLNHGGLLRIEDTDPGGQPPGTSIYVLLPGRRMPIPQLPGATAGARSTDIENSRGSANVISVESQSTRAT</sequence>
<dbReference type="EC" id="2.7.13.3"/>
<dbReference type="EC" id="3.1.3.-"/>
<dbReference type="EMBL" id="AM408590">
    <property type="protein sequence ID" value="CAL71024.1"/>
    <property type="molecule type" value="Genomic_DNA"/>
</dbReference>
<dbReference type="RefSeq" id="WP_003405123.1">
    <property type="nucleotide sequence ID" value="NC_008769.1"/>
</dbReference>
<dbReference type="SMR" id="A1KHB8"/>
<dbReference type="GeneID" id="45424951"/>
<dbReference type="KEGG" id="mbb:BCG_1037"/>
<dbReference type="HOGENOM" id="CLU_000445_89_6_11"/>
<dbReference type="Proteomes" id="UP000001472">
    <property type="component" value="Chromosome"/>
</dbReference>
<dbReference type="GO" id="GO:0005886">
    <property type="term" value="C:plasma membrane"/>
    <property type="evidence" value="ECO:0007669"/>
    <property type="project" value="UniProtKB-SubCell"/>
</dbReference>
<dbReference type="GO" id="GO:0005524">
    <property type="term" value="F:ATP binding"/>
    <property type="evidence" value="ECO:0007669"/>
    <property type="project" value="UniProtKB-KW"/>
</dbReference>
<dbReference type="GO" id="GO:0004721">
    <property type="term" value="F:phosphoprotein phosphatase activity"/>
    <property type="evidence" value="ECO:0007669"/>
    <property type="project" value="UniProtKB-KW"/>
</dbReference>
<dbReference type="GO" id="GO:0000155">
    <property type="term" value="F:phosphorelay sensor kinase activity"/>
    <property type="evidence" value="ECO:0007669"/>
    <property type="project" value="InterPro"/>
</dbReference>
<dbReference type="CDD" id="cd06225">
    <property type="entry name" value="HAMP"/>
    <property type="match status" value="1"/>
</dbReference>
<dbReference type="CDD" id="cd00075">
    <property type="entry name" value="HATPase"/>
    <property type="match status" value="1"/>
</dbReference>
<dbReference type="CDD" id="cd00082">
    <property type="entry name" value="HisKA"/>
    <property type="match status" value="1"/>
</dbReference>
<dbReference type="FunFam" id="1.10.287.130:FF:000031">
    <property type="entry name" value="Two-component sensor histidine kinase"/>
    <property type="match status" value="1"/>
</dbReference>
<dbReference type="FunFam" id="3.30.565.10:FF:000066">
    <property type="entry name" value="Two-component sensor kinase MprB"/>
    <property type="match status" value="1"/>
</dbReference>
<dbReference type="Gene3D" id="1.10.287.130">
    <property type="match status" value="1"/>
</dbReference>
<dbReference type="Gene3D" id="6.10.340.10">
    <property type="match status" value="1"/>
</dbReference>
<dbReference type="Gene3D" id="3.30.565.10">
    <property type="entry name" value="Histidine kinase-like ATPase, C-terminal domain"/>
    <property type="match status" value="1"/>
</dbReference>
<dbReference type="InterPro" id="IPR050980">
    <property type="entry name" value="2C_sensor_his_kinase"/>
</dbReference>
<dbReference type="InterPro" id="IPR003660">
    <property type="entry name" value="HAMP_dom"/>
</dbReference>
<dbReference type="InterPro" id="IPR036890">
    <property type="entry name" value="HATPase_C_sf"/>
</dbReference>
<dbReference type="InterPro" id="IPR005467">
    <property type="entry name" value="His_kinase_dom"/>
</dbReference>
<dbReference type="InterPro" id="IPR003661">
    <property type="entry name" value="HisK_dim/P_dom"/>
</dbReference>
<dbReference type="InterPro" id="IPR036097">
    <property type="entry name" value="HisK_dim/P_sf"/>
</dbReference>
<dbReference type="InterPro" id="IPR004358">
    <property type="entry name" value="Sig_transdc_His_kin-like_C"/>
</dbReference>
<dbReference type="PANTHER" id="PTHR44936">
    <property type="entry name" value="SENSOR PROTEIN CREC"/>
    <property type="match status" value="1"/>
</dbReference>
<dbReference type="PANTHER" id="PTHR44936:SF9">
    <property type="entry name" value="SENSOR PROTEIN CREC"/>
    <property type="match status" value="1"/>
</dbReference>
<dbReference type="Pfam" id="PF00672">
    <property type="entry name" value="HAMP"/>
    <property type="match status" value="1"/>
</dbReference>
<dbReference type="Pfam" id="PF02518">
    <property type="entry name" value="HATPase_c"/>
    <property type="match status" value="1"/>
</dbReference>
<dbReference type="Pfam" id="PF00512">
    <property type="entry name" value="HisKA"/>
    <property type="match status" value="1"/>
</dbReference>
<dbReference type="PRINTS" id="PR00344">
    <property type="entry name" value="BCTRLSENSOR"/>
</dbReference>
<dbReference type="SMART" id="SM00304">
    <property type="entry name" value="HAMP"/>
    <property type="match status" value="1"/>
</dbReference>
<dbReference type="SMART" id="SM00387">
    <property type="entry name" value="HATPase_c"/>
    <property type="match status" value="1"/>
</dbReference>
<dbReference type="SMART" id="SM00388">
    <property type="entry name" value="HisKA"/>
    <property type="match status" value="1"/>
</dbReference>
<dbReference type="SUPFAM" id="SSF55874">
    <property type="entry name" value="ATPase domain of HSP90 chaperone/DNA topoisomerase II/histidine kinase"/>
    <property type="match status" value="1"/>
</dbReference>
<dbReference type="SUPFAM" id="SSF158472">
    <property type="entry name" value="HAMP domain-like"/>
    <property type="match status" value="1"/>
</dbReference>
<dbReference type="SUPFAM" id="SSF47384">
    <property type="entry name" value="Homodimeric domain of signal transducing histidine kinase"/>
    <property type="match status" value="1"/>
</dbReference>
<dbReference type="PROSITE" id="PS50885">
    <property type="entry name" value="HAMP"/>
    <property type="match status" value="1"/>
</dbReference>
<dbReference type="PROSITE" id="PS50109">
    <property type="entry name" value="HIS_KIN"/>
    <property type="match status" value="1"/>
</dbReference>
<protein>
    <recommendedName>
        <fullName>Signal transduction histidine-protein kinase/phosphatase MprB</fullName>
        <ecNumber>2.7.13.3</ecNumber>
        <ecNumber>3.1.3.-</ecNumber>
    </recommendedName>
    <alternativeName>
        <fullName>Mycobacterial persistence regulator B</fullName>
    </alternativeName>
</protein>
<feature type="chain" id="PRO_0000308433" description="Signal transduction histidine-protein kinase/phosphatase MprB">
    <location>
        <begin position="1"/>
        <end position="504"/>
    </location>
</feature>
<feature type="topological domain" description="Cytoplasmic" evidence="2">
    <location>
        <begin position="1"/>
        <end position="26"/>
    </location>
</feature>
<feature type="transmembrane region" description="Helical" evidence="2">
    <location>
        <begin position="27"/>
        <end position="47"/>
    </location>
</feature>
<feature type="topological domain" description="Extracellular" evidence="2">
    <location>
        <begin position="48"/>
        <end position="163"/>
    </location>
</feature>
<feature type="transmembrane region" description="Helical" evidence="2">
    <location>
        <begin position="164"/>
        <end position="184"/>
    </location>
</feature>
<feature type="topological domain" description="Cytoplasmic" evidence="2">
    <location>
        <begin position="185"/>
        <end position="504"/>
    </location>
</feature>
<feature type="domain" description="HAMP" evidence="3">
    <location>
        <begin position="186"/>
        <end position="238"/>
    </location>
</feature>
<feature type="domain" description="Histidine kinase" evidence="4">
    <location>
        <begin position="246"/>
        <end position="466"/>
    </location>
</feature>
<feature type="region of interest" description="Disordered" evidence="5">
    <location>
        <begin position="471"/>
        <end position="504"/>
    </location>
</feature>
<feature type="compositionally biased region" description="Polar residues" evidence="5">
    <location>
        <begin position="487"/>
        <end position="504"/>
    </location>
</feature>
<feature type="modified residue" description="Phosphohistidine; by autocatalysis" evidence="4">
    <location>
        <position position="249"/>
    </location>
</feature>
<accession>A1KHB8</accession>
<comment type="function">
    <text evidence="1">Member of the two-component regulatory system MprB/MprA which contributes to maintaining a balance among several systems involved in stress resistance and is required for establishment and maintenance of persistent infection in the host. In response to environmental signals MprB acts both as a membrane-associated protein kinase that undergoes autophosphorylation and subsequently transfers the phosphate to MprA, and a protein phosphatase that dephosphorylates phospho-MprA (By similarity).</text>
</comment>
<comment type="catalytic activity">
    <reaction>
        <text>ATP + protein L-histidine = ADP + protein N-phospho-L-histidine.</text>
        <dbReference type="EC" id="2.7.13.3"/>
    </reaction>
</comment>
<comment type="cofactor">
    <cofactor evidence="1">
        <name>Mg(2+)</name>
        <dbReference type="ChEBI" id="CHEBI:18420"/>
    </cofactor>
    <cofactor evidence="1">
        <name>Mn(2+)</name>
        <dbReference type="ChEBI" id="CHEBI:29035"/>
    </cofactor>
</comment>
<comment type="subcellular location">
    <subcellularLocation>
        <location evidence="6">Cell membrane</location>
        <topology evidence="6">Multi-pass membrane protein</topology>
    </subcellularLocation>
</comment>
<comment type="PTM">
    <text evidence="1">Autophosphorylated.</text>
</comment>
<gene>
    <name type="primary">mprB</name>
    <name type="ordered locus">BCG_1037</name>
</gene>
<keyword id="KW-0067">ATP-binding</keyword>
<keyword id="KW-1003">Cell membrane</keyword>
<keyword id="KW-0378">Hydrolase</keyword>
<keyword id="KW-0418">Kinase</keyword>
<keyword id="KW-0460">Magnesium</keyword>
<keyword id="KW-0464">Manganese</keyword>
<keyword id="KW-0472">Membrane</keyword>
<keyword id="KW-0547">Nucleotide-binding</keyword>
<keyword id="KW-0597">Phosphoprotein</keyword>
<keyword id="KW-0904">Protein phosphatase</keyword>
<keyword id="KW-0346">Stress response</keyword>
<keyword id="KW-0808">Transferase</keyword>
<keyword id="KW-0812">Transmembrane</keyword>
<keyword id="KW-1133">Transmembrane helix</keyword>
<keyword id="KW-0902">Two-component regulatory system</keyword>
<keyword id="KW-0843">Virulence</keyword>
<proteinExistence type="inferred from homology"/>